<evidence type="ECO:0000269" key="1">
    <source>
    </source>
</evidence>
<evidence type="ECO:0000305" key="2"/>
<sequence>QAVRYANGYTYDIETGQVSSPYTGRVYETKGKAPFYGFGFEHPYHYYPGYYHGYPHAFY</sequence>
<keyword id="KW-0193">Cuticle</keyword>
<keyword id="KW-0903">Direct protein sequencing</keyword>
<keyword id="KW-0873">Pyrrolidone carboxylic acid</keyword>
<protein>
    <recommendedName>
        <fullName>Cuticle protein 7 isoform a</fullName>
    </recommendedName>
    <alternativeName>
        <fullName>LpCP7a</fullName>
    </alternativeName>
</protein>
<proteinExistence type="evidence at protein level"/>
<feature type="chain" id="PRO_0000196173" description="Cuticle protein 7 isoform a">
    <location>
        <begin position="1"/>
        <end position="59"/>
    </location>
</feature>
<feature type="modified residue" description="Pyrrolidone carboxylic acid" evidence="1">
    <location>
        <position position="1"/>
    </location>
</feature>
<comment type="mass spectrometry"/>
<accession>P83359</accession>
<organism evidence="2">
    <name type="scientific">Limulus polyphemus</name>
    <name type="common">Atlantic horseshoe crab</name>
    <dbReference type="NCBI Taxonomy" id="6850"/>
    <lineage>
        <taxon>Eukaryota</taxon>
        <taxon>Metazoa</taxon>
        <taxon>Ecdysozoa</taxon>
        <taxon>Arthropoda</taxon>
        <taxon>Chelicerata</taxon>
        <taxon>Merostomata</taxon>
        <taxon>Xiphosura</taxon>
        <taxon>Limulidae</taxon>
        <taxon>Limulus</taxon>
    </lineage>
</organism>
<name>CU7A_LIMPO</name>
<dbReference type="Proteomes" id="UP000694941">
    <property type="component" value="Unplaced"/>
</dbReference>
<dbReference type="GO" id="GO:0042302">
    <property type="term" value="F:structural constituent of cuticle"/>
    <property type="evidence" value="ECO:0007669"/>
    <property type="project" value="UniProtKB-KW"/>
</dbReference>
<dbReference type="InterPro" id="IPR012540">
    <property type="entry name" value="Cuticle_2"/>
</dbReference>
<dbReference type="Pfam" id="PF08184">
    <property type="entry name" value="Cuticle_2"/>
    <property type="match status" value="1"/>
</dbReference>
<reference key="1">
    <citation type="journal article" date="2003" name="Comp. Biochem. Physiol.">
        <title>Cuticular proteins from the horseshoe crab, Limulus polyphemus.</title>
        <authorList>
            <person name="Ditzel N."/>
            <person name="Andersen S.O."/>
            <person name="Hoejrup P."/>
        </authorList>
    </citation>
    <scope>PROTEIN SEQUENCE</scope>
    <scope>MASS SPECTROMETRY</scope>
    <scope>PYROGLUTAMATE FORMATION AT GLN-1</scope>
    <source>
        <tissue>Carapace cuticle</tissue>
    </source>
</reference>